<sequence length="286" mass="31681">MNDIDTITNAWGRWKTAQYGTTCWFTESTQYGRNKDTRSYMQHQTNVSAPKDLVYSNFVQQDGGSTLLGQYDMINEGSQVIELAVNLQQGLVDTFTWSVTEQLKVGVEVKVKANIPLVGGAEITSTVELSLSSTQGASTSKSSNYGASTKVLISPHSHGWGEVALSFTELRTQWVGNVGLQGYVAIWFNNKVALNNDGDYHYLWFIPVEQVFWECVQHNIVNTSGYVVQGNGVLAQATGTFHSSVGLNLKTIAHERPYPETSEAVRTFYNYASLVPDLETRVRSAE</sequence>
<reference key="1">
    <citation type="journal article" date="1989" name="Mol. Microbiol.">
        <title>Pseudomonas aeruginosa cytotoxin: the nucleotide sequence of the gene and the mechanism of activation of the protoxin.</title>
        <authorList>
            <person name="Hayashi T."/>
            <person name="Kamio Y."/>
            <person name="Hishinuma F."/>
            <person name="Usami Y."/>
            <person name="Titani K."/>
            <person name="Terawaki Y."/>
        </authorList>
    </citation>
    <scope>NUCLEOTIDE SEQUENCE [GENOMIC DNA]</scope>
    <scope>PARTIAL PROTEIN SEQUENCE</scope>
    <source>
        <strain>PA158</strain>
    </source>
</reference>
<reference key="2">
    <citation type="journal article" date="1990" name="Arch. Microbiol.">
        <title>The cytotoxin of Pseudomonas aeruginosa: cytotoxicity requires proteolytic activation.</title>
        <authorList>
            <person name="Orlik-Eisel G."/>
            <person name="Lutz F."/>
            <person name="Henschen A."/>
            <person name="Eisel U."/>
            <person name="Struckmeier M."/>
            <person name="Kraeuter J."/>
            <person name="Niemann H."/>
        </authorList>
    </citation>
    <scope>NUCLEOTIDE SEQUENCE [GENOMIC DNA]</scope>
    <scope>PARTIAL PROTEIN SEQUENCE</scope>
</reference>
<reference key="3">
    <citation type="journal article" date="1989" name="Microb. Pathog.">
        <title>Purification and characterization of cytotoxin from the crude extract of Pseudomonas aeruginosa.</title>
        <authorList>
            <person name="Hayashi T."/>
            <person name="Kamio Y."/>
            <person name="Terawaki Y."/>
        </authorList>
    </citation>
    <scope>PROTEIN SEQUENCE OF 1-21</scope>
    <source>
        <strain>PA158</strain>
    </source>
</reference>
<proteinExistence type="evidence at protein level"/>
<keyword id="KW-0903">Direct protein sequencing</keyword>
<keyword id="KW-0964">Secreted</keyword>
<keyword id="KW-0800">Toxin</keyword>
<keyword id="KW-0843">Virulence</keyword>
<evidence type="ECO:0000305" key="1"/>
<dbReference type="EMBL" id="X14956">
    <property type="protein sequence ID" value="CAA33079.1"/>
    <property type="molecule type" value="Genomic_DNA"/>
</dbReference>
<dbReference type="PIR" id="A60690">
    <property type="entry name" value="A60690"/>
</dbReference>
<dbReference type="RefSeq" id="WP_015967180.1">
    <property type="nucleotide sequence ID" value="NZ_CP008868.1"/>
</dbReference>
<dbReference type="SMR" id="P14608"/>
<dbReference type="TCDB" id="1.C.13.1.1">
    <property type="family name" value="the channel-forming leukocidin cytotoxin (ctx) family"/>
</dbReference>
<dbReference type="PATRIC" id="fig|287.2551.peg.4090"/>
<dbReference type="GO" id="GO:0005576">
    <property type="term" value="C:extracellular region"/>
    <property type="evidence" value="ECO:0007669"/>
    <property type="project" value="UniProtKB-SubCell"/>
</dbReference>
<dbReference type="GO" id="GO:0090729">
    <property type="term" value="F:toxin activity"/>
    <property type="evidence" value="ECO:0007669"/>
    <property type="project" value="UniProtKB-KW"/>
</dbReference>
<dbReference type="CDD" id="cd20237">
    <property type="entry name" value="PFM_LIN24-like"/>
    <property type="match status" value="1"/>
</dbReference>
<dbReference type="Gene3D" id="2.170.15.10">
    <property type="entry name" value="Proaerolysin, chain A, domain 3"/>
    <property type="match status" value="1"/>
</dbReference>
<dbReference type="InterPro" id="IPR004991">
    <property type="entry name" value="Aerolysin-like"/>
</dbReference>
<dbReference type="Pfam" id="PF03318">
    <property type="entry name" value="ETX_MTX2"/>
    <property type="match status" value="1"/>
</dbReference>
<dbReference type="SUPFAM" id="SSF56973">
    <property type="entry name" value="Aerolisin/ETX pore-forming domain"/>
    <property type="match status" value="1"/>
</dbReference>
<comment type="function">
    <text>Cytotoxin is thought to form hydrophilic pores in cell membranes.</text>
</comment>
<comment type="subcellular location">
    <subcellularLocation>
        <location>Secreted</location>
    </subcellularLocation>
    <text>Produced as a cell-associated inactive precursor which is not secreted extracellularly. The toxin is converted into its active form by the action of proteases concomitantly with cell lysis and is released into the medium.</text>
</comment>
<comment type="miscellaneous">
    <text>This protein toxin may be one of the virulence factors because it shows strong cytotoxic effects on most eukaryotic cells, especially leukocytes.</text>
</comment>
<comment type="similarity">
    <text evidence="1">Belongs to the aerolysin family.</text>
</comment>
<protein>
    <recommendedName>
        <fullName>Cytotoxin</fullName>
    </recommendedName>
    <alternativeName>
        <fullName>Leucocidin</fullName>
    </alternativeName>
</protein>
<accession>P14608</accession>
<organism>
    <name type="scientific">Pseudomonas aeruginosa</name>
    <dbReference type="NCBI Taxonomy" id="287"/>
    <lineage>
        <taxon>Bacteria</taxon>
        <taxon>Pseudomonadati</taxon>
        <taxon>Pseudomonadota</taxon>
        <taxon>Gammaproteobacteria</taxon>
        <taxon>Pseudomonadales</taxon>
        <taxon>Pseudomonadaceae</taxon>
        <taxon>Pseudomonas</taxon>
    </lineage>
</organism>
<feature type="chain" id="PRO_0000035634" description="Cytotoxin">
    <location>
        <begin position="1"/>
        <end position="266"/>
    </location>
</feature>
<feature type="propeptide" id="PRO_0000035635">
    <location>
        <begin position="267"/>
        <end position="286"/>
    </location>
</feature>
<name>CTX_PSEAI</name>
<gene>
    <name type="primary">ctx</name>
</gene>